<keyword id="KW-1003">Cell membrane</keyword>
<keyword id="KW-0285">Flavoprotein</keyword>
<keyword id="KW-0288">FMN</keyword>
<keyword id="KW-0472">Membrane</keyword>
<keyword id="KW-0560">Oxidoreductase</keyword>
<keyword id="KW-0665">Pyrimidine biosynthesis</keyword>
<keyword id="KW-1185">Reference proteome</keyword>
<name>PYRD_THIDA</name>
<proteinExistence type="inferred from homology"/>
<feature type="chain" id="PRO_1000024240" description="Dihydroorotate dehydrogenase (quinone)">
    <location>
        <begin position="1"/>
        <end position="337"/>
    </location>
</feature>
<feature type="active site" description="Nucleophile" evidence="1">
    <location>
        <position position="174"/>
    </location>
</feature>
<feature type="binding site" evidence="1">
    <location>
        <begin position="61"/>
        <end position="65"/>
    </location>
    <ligand>
        <name>FMN</name>
        <dbReference type="ChEBI" id="CHEBI:58210"/>
    </ligand>
</feature>
<feature type="binding site" evidence="1">
    <location>
        <position position="65"/>
    </location>
    <ligand>
        <name>substrate</name>
    </ligand>
</feature>
<feature type="binding site" evidence="1">
    <location>
        <position position="85"/>
    </location>
    <ligand>
        <name>FMN</name>
        <dbReference type="ChEBI" id="CHEBI:58210"/>
    </ligand>
</feature>
<feature type="binding site" evidence="1">
    <location>
        <begin position="110"/>
        <end position="114"/>
    </location>
    <ligand>
        <name>substrate</name>
    </ligand>
</feature>
<feature type="binding site" evidence="1">
    <location>
        <position position="138"/>
    </location>
    <ligand>
        <name>FMN</name>
        <dbReference type="ChEBI" id="CHEBI:58210"/>
    </ligand>
</feature>
<feature type="binding site" evidence="1">
    <location>
        <position position="171"/>
    </location>
    <ligand>
        <name>FMN</name>
        <dbReference type="ChEBI" id="CHEBI:58210"/>
    </ligand>
</feature>
<feature type="binding site" evidence="1">
    <location>
        <position position="171"/>
    </location>
    <ligand>
        <name>substrate</name>
    </ligand>
</feature>
<feature type="binding site" evidence="1">
    <location>
        <position position="176"/>
    </location>
    <ligand>
        <name>substrate</name>
    </ligand>
</feature>
<feature type="binding site" evidence="1">
    <location>
        <position position="216"/>
    </location>
    <ligand>
        <name>FMN</name>
        <dbReference type="ChEBI" id="CHEBI:58210"/>
    </ligand>
</feature>
<feature type="binding site" evidence="1">
    <location>
        <position position="244"/>
    </location>
    <ligand>
        <name>FMN</name>
        <dbReference type="ChEBI" id="CHEBI:58210"/>
    </ligand>
</feature>
<feature type="binding site" evidence="1">
    <location>
        <begin position="245"/>
        <end position="246"/>
    </location>
    <ligand>
        <name>substrate</name>
    </ligand>
</feature>
<feature type="binding site" evidence="1">
    <location>
        <position position="267"/>
    </location>
    <ligand>
        <name>FMN</name>
        <dbReference type="ChEBI" id="CHEBI:58210"/>
    </ligand>
</feature>
<feature type="binding site" evidence="1">
    <location>
        <position position="296"/>
    </location>
    <ligand>
        <name>FMN</name>
        <dbReference type="ChEBI" id="CHEBI:58210"/>
    </ligand>
</feature>
<feature type="binding site" evidence="1">
    <location>
        <begin position="317"/>
        <end position="318"/>
    </location>
    <ligand>
        <name>FMN</name>
        <dbReference type="ChEBI" id="CHEBI:58210"/>
    </ligand>
</feature>
<dbReference type="EC" id="1.3.5.2" evidence="1"/>
<dbReference type="EMBL" id="CP000116">
    <property type="protein sequence ID" value="AAZ96598.1"/>
    <property type="molecule type" value="Genomic_DNA"/>
</dbReference>
<dbReference type="RefSeq" id="WP_011311157.1">
    <property type="nucleotide sequence ID" value="NC_007404.1"/>
</dbReference>
<dbReference type="SMR" id="Q3SL21"/>
<dbReference type="STRING" id="292415.Tbd_0645"/>
<dbReference type="KEGG" id="tbd:Tbd_0645"/>
<dbReference type="eggNOG" id="COG0167">
    <property type="taxonomic scope" value="Bacteria"/>
</dbReference>
<dbReference type="HOGENOM" id="CLU_013640_2_0_4"/>
<dbReference type="OrthoDB" id="9802377at2"/>
<dbReference type="UniPathway" id="UPA00070">
    <property type="reaction ID" value="UER00946"/>
</dbReference>
<dbReference type="Proteomes" id="UP000008291">
    <property type="component" value="Chromosome"/>
</dbReference>
<dbReference type="GO" id="GO:0005737">
    <property type="term" value="C:cytoplasm"/>
    <property type="evidence" value="ECO:0007669"/>
    <property type="project" value="InterPro"/>
</dbReference>
<dbReference type="GO" id="GO:0005886">
    <property type="term" value="C:plasma membrane"/>
    <property type="evidence" value="ECO:0007669"/>
    <property type="project" value="UniProtKB-SubCell"/>
</dbReference>
<dbReference type="GO" id="GO:0106430">
    <property type="term" value="F:dihydroorotate dehydrogenase (quinone) activity"/>
    <property type="evidence" value="ECO:0007669"/>
    <property type="project" value="UniProtKB-EC"/>
</dbReference>
<dbReference type="GO" id="GO:0006207">
    <property type="term" value="P:'de novo' pyrimidine nucleobase biosynthetic process"/>
    <property type="evidence" value="ECO:0007669"/>
    <property type="project" value="InterPro"/>
</dbReference>
<dbReference type="GO" id="GO:0044205">
    <property type="term" value="P:'de novo' UMP biosynthetic process"/>
    <property type="evidence" value="ECO:0007669"/>
    <property type="project" value="UniProtKB-UniRule"/>
</dbReference>
<dbReference type="CDD" id="cd04738">
    <property type="entry name" value="DHOD_2_like"/>
    <property type="match status" value="1"/>
</dbReference>
<dbReference type="FunFam" id="3.20.20.70:FF:000028">
    <property type="entry name" value="Dihydroorotate dehydrogenase (quinone)"/>
    <property type="match status" value="1"/>
</dbReference>
<dbReference type="Gene3D" id="3.20.20.70">
    <property type="entry name" value="Aldolase class I"/>
    <property type="match status" value="1"/>
</dbReference>
<dbReference type="HAMAP" id="MF_00225">
    <property type="entry name" value="DHO_dh_type2"/>
    <property type="match status" value="1"/>
</dbReference>
<dbReference type="InterPro" id="IPR013785">
    <property type="entry name" value="Aldolase_TIM"/>
</dbReference>
<dbReference type="InterPro" id="IPR050074">
    <property type="entry name" value="DHO_dehydrogenase"/>
</dbReference>
<dbReference type="InterPro" id="IPR012135">
    <property type="entry name" value="Dihydroorotate_DH_1_2"/>
</dbReference>
<dbReference type="InterPro" id="IPR005719">
    <property type="entry name" value="Dihydroorotate_DH_2"/>
</dbReference>
<dbReference type="InterPro" id="IPR005720">
    <property type="entry name" value="Dihydroorotate_DH_cat"/>
</dbReference>
<dbReference type="InterPro" id="IPR001295">
    <property type="entry name" value="Dihydroorotate_DH_CS"/>
</dbReference>
<dbReference type="NCBIfam" id="NF003644">
    <property type="entry name" value="PRK05286.1-1"/>
    <property type="match status" value="1"/>
</dbReference>
<dbReference type="NCBIfam" id="NF003645">
    <property type="entry name" value="PRK05286.1-2"/>
    <property type="match status" value="1"/>
</dbReference>
<dbReference type="NCBIfam" id="NF003646">
    <property type="entry name" value="PRK05286.1-4"/>
    <property type="match status" value="1"/>
</dbReference>
<dbReference type="NCBIfam" id="NF003652">
    <property type="entry name" value="PRK05286.2-5"/>
    <property type="match status" value="1"/>
</dbReference>
<dbReference type="NCBIfam" id="TIGR01036">
    <property type="entry name" value="pyrD_sub2"/>
    <property type="match status" value="1"/>
</dbReference>
<dbReference type="PANTHER" id="PTHR48109:SF4">
    <property type="entry name" value="DIHYDROOROTATE DEHYDROGENASE (QUINONE), MITOCHONDRIAL"/>
    <property type="match status" value="1"/>
</dbReference>
<dbReference type="PANTHER" id="PTHR48109">
    <property type="entry name" value="DIHYDROOROTATE DEHYDROGENASE (QUINONE), MITOCHONDRIAL-RELATED"/>
    <property type="match status" value="1"/>
</dbReference>
<dbReference type="Pfam" id="PF01180">
    <property type="entry name" value="DHO_dh"/>
    <property type="match status" value="1"/>
</dbReference>
<dbReference type="PIRSF" id="PIRSF000164">
    <property type="entry name" value="DHO_oxidase"/>
    <property type="match status" value="1"/>
</dbReference>
<dbReference type="SUPFAM" id="SSF51395">
    <property type="entry name" value="FMN-linked oxidoreductases"/>
    <property type="match status" value="1"/>
</dbReference>
<dbReference type="PROSITE" id="PS00911">
    <property type="entry name" value="DHODEHASE_1"/>
    <property type="match status" value="1"/>
</dbReference>
<dbReference type="PROSITE" id="PS00912">
    <property type="entry name" value="DHODEHASE_2"/>
    <property type="match status" value="1"/>
</dbReference>
<evidence type="ECO:0000255" key="1">
    <source>
        <dbReference type="HAMAP-Rule" id="MF_00225"/>
    </source>
</evidence>
<accession>Q3SL21</accession>
<comment type="function">
    <text evidence="1">Catalyzes the conversion of dihydroorotate to orotate with quinone as electron acceptor.</text>
</comment>
<comment type="catalytic activity">
    <reaction evidence="1">
        <text>(S)-dihydroorotate + a quinone = orotate + a quinol</text>
        <dbReference type="Rhea" id="RHEA:30187"/>
        <dbReference type="ChEBI" id="CHEBI:24646"/>
        <dbReference type="ChEBI" id="CHEBI:30839"/>
        <dbReference type="ChEBI" id="CHEBI:30864"/>
        <dbReference type="ChEBI" id="CHEBI:132124"/>
        <dbReference type="EC" id="1.3.5.2"/>
    </reaction>
</comment>
<comment type="cofactor">
    <cofactor evidence="1">
        <name>FMN</name>
        <dbReference type="ChEBI" id="CHEBI:58210"/>
    </cofactor>
    <text evidence="1">Binds 1 FMN per subunit.</text>
</comment>
<comment type="pathway">
    <text evidence="1">Pyrimidine metabolism; UMP biosynthesis via de novo pathway; orotate from (S)-dihydroorotate (quinone route): step 1/1.</text>
</comment>
<comment type="subunit">
    <text evidence="1">Monomer.</text>
</comment>
<comment type="subcellular location">
    <subcellularLocation>
        <location evidence="1">Cell membrane</location>
        <topology evidence="1">Peripheral membrane protein</topology>
    </subcellularLocation>
</comment>
<comment type="similarity">
    <text evidence="1">Belongs to the dihydroorotate dehydrogenase family. Type 2 subfamily.</text>
</comment>
<organism>
    <name type="scientific">Thiobacillus denitrificans (strain ATCC 25259 / T1)</name>
    <dbReference type="NCBI Taxonomy" id="292415"/>
    <lineage>
        <taxon>Bacteria</taxon>
        <taxon>Pseudomonadati</taxon>
        <taxon>Pseudomonadota</taxon>
        <taxon>Betaproteobacteria</taxon>
        <taxon>Nitrosomonadales</taxon>
        <taxon>Thiobacillaceae</taxon>
        <taxon>Thiobacillus</taxon>
    </lineage>
</organism>
<reference key="1">
    <citation type="journal article" date="2006" name="J. Bacteriol.">
        <title>The genome sequence of the obligately chemolithoautotrophic, facultatively anaerobic bacterium Thiobacillus denitrificans.</title>
        <authorList>
            <person name="Beller H.R."/>
            <person name="Chain P.S."/>
            <person name="Letain T.E."/>
            <person name="Chakicherla A."/>
            <person name="Larimer F.W."/>
            <person name="Richardson P.M."/>
            <person name="Coleman M.A."/>
            <person name="Wood A.P."/>
            <person name="Kelly D.P."/>
        </authorList>
    </citation>
    <scope>NUCLEOTIDE SEQUENCE [LARGE SCALE GENOMIC DNA]</scope>
    <source>
        <strain>ATCC 25259 / T1</strain>
    </source>
</reference>
<protein>
    <recommendedName>
        <fullName evidence="1">Dihydroorotate dehydrogenase (quinone)</fullName>
        <ecNumber evidence="1">1.3.5.2</ecNumber>
    </recommendedName>
    <alternativeName>
        <fullName evidence="1">DHOdehase</fullName>
        <shortName evidence="1">DHOD</shortName>
        <shortName evidence="1">DHODase</shortName>
    </alternativeName>
    <alternativeName>
        <fullName evidence="1">Dihydroorotate oxidase</fullName>
    </alternativeName>
</protein>
<sequence>MLYSLIRPALFSLDAEDAHGLTLTGLDVAQRLGLVGLQPRATGKPVQVMGIDFPNAVGLAAGLDKDGAHLKGLAALGFGFLEIGTVTPRPQPGNPKPRLFRLPAAEGIINRMGFNNLGVDNLVRNVVASGYTGVLGINIGKNKDTPNERAADDYLACLDKVYAHARYVTVNISSPNTQNLRELQQDEALDALLSAIKLRQSELAQQHGRYVPIALKIAPDLDEAQIAAIAALLMRHGIDAVIATNTTIARDAVAGLPNANESGGLSGAPVREASTRVVRTLAQHLGGALPIIGVGGILSGDDARAKIAAGASLVQLYSGLIYRGPGLVRECVERLAQ</sequence>
<gene>
    <name evidence="1" type="primary">pyrD</name>
    <name type="ordered locus">Tbd_0645</name>
</gene>